<organism>
    <name type="scientific">Ureaplasma parvum serovar 3 (strain ATCC 27815 / 27 / NCTC 11736)</name>
    <dbReference type="NCBI Taxonomy" id="505682"/>
    <lineage>
        <taxon>Bacteria</taxon>
        <taxon>Bacillati</taxon>
        <taxon>Mycoplasmatota</taxon>
        <taxon>Mycoplasmoidales</taxon>
        <taxon>Mycoplasmoidaceae</taxon>
        <taxon>Ureaplasma</taxon>
    </lineage>
</organism>
<comment type="function">
    <text evidence="1">Catalyzes the reversible formation of acyl-phosphate (acyl-PO(4)) from acyl-[acyl-carrier-protein] (acyl-ACP). This enzyme utilizes acyl-ACP as fatty acyl donor, but not acyl-CoA.</text>
</comment>
<comment type="catalytic activity">
    <reaction evidence="1">
        <text>a fatty acyl-[ACP] + phosphate = an acyl phosphate + holo-[ACP]</text>
        <dbReference type="Rhea" id="RHEA:42292"/>
        <dbReference type="Rhea" id="RHEA-COMP:9685"/>
        <dbReference type="Rhea" id="RHEA-COMP:14125"/>
        <dbReference type="ChEBI" id="CHEBI:43474"/>
        <dbReference type="ChEBI" id="CHEBI:59918"/>
        <dbReference type="ChEBI" id="CHEBI:64479"/>
        <dbReference type="ChEBI" id="CHEBI:138651"/>
        <dbReference type="EC" id="2.3.1.274"/>
    </reaction>
</comment>
<comment type="pathway">
    <text evidence="1">Lipid metabolism; phospholipid metabolism.</text>
</comment>
<comment type="subunit">
    <text evidence="1">Homodimer. Probably interacts with PlsY.</text>
</comment>
<comment type="subcellular location">
    <subcellularLocation>
        <location evidence="1">Cytoplasm</location>
    </subcellularLocation>
    <text evidence="1">Associated with the membrane possibly through PlsY.</text>
</comment>
<comment type="similarity">
    <text evidence="1">Belongs to the PlsX family.</text>
</comment>
<sequence>MEKIKILLDTMGYENDLEHVIKAAKDFYYQHEDDLEIILVGNEQLIKPLLDNDWRLFPIVHTEVSIEQNDTILSARKKQNSSMHLALRYLKDKQADGMLTAGNSAVFVYNAYATIGLLEHIKKPAFMPFVPTIDGGVTNLLDVGASIDVDGTDLFNFAIMANTIAKMRTPNPRVGVLNIGTEDHKGLPYHQEANELLKTSNLNYVGFVEPKTILEREVDVLVADGFSGNIALKTMEGVGKTISNFLKNEYKKPKNLFAALLSKPIFKKIKKAFDYKEHAGAFVLGLDGILVKTHGSADYQQFMSALKILYETIKADVLNEIKKDLNNYYGQ</sequence>
<keyword id="KW-0963">Cytoplasm</keyword>
<keyword id="KW-0444">Lipid biosynthesis</keyword>
<keyword id="KW-0443">Lipid metabolism</keyword>
<keyword id="KW-0594">Phospholipid biosynthesis</keyword>
<keyword id="KW-1208">Phospholipid metabolism</keyword>
<keyword id="KW-0808">Transferase</keyword>
<accession>B1AIJ3</accession>
<protein>
    <recommendedName>
        <fullName evidence="1">Phosphate acyltransferase</fullName>
        <ecNumber evidence="1">2.3.1.274</ecNumber>
    </recommendedName>
    <alternativeName>
        <fullName evidence="1">Acyl-ACP phosphotransacylase</fullName>
    </alternativeName>
    <alternativeName>
        <fullName evidence="1">Acyl-[acyl-carrier-protein]--phosphate acyltransferase</fullName>
    </alternativeName>
    <alternativeName>
        <fullName evidence="1">Phosphate-acyl-ACP acyltransferase</fullName>
    </alternativeName>
</protein>
<reference key="1">
    <citation type="submission" date="2008-02" db="EMBL/GenBank/DDBJ databases">
        <title>Genome sequence of Ureaplasma parvum serovar 3.</title>
        <authorList>
            <person name="Methe B.A."/>
            <person name="Glass J."/>
            <person name="Waites K."/>
            <person name="Shrivastava S."/>
        </authorList>
    </citation>
    <scope>NUCLEOTIDE SEQUENCE [LARGE SCALE GENOMIC DNA]</scope>
    <source>
        <strain>ATCC 27815 / 27 / NCTC 11736</strain>
    </source>
</reference>
<gene>
    <name evidence="1" type="primary">plsX</name>
    <name type="ordered locus">UPA3_0212</name>
</gene>
<proteinExistence type="inferred from homology"/>
<evidence type="ECO:0000255" key="1">
    <source>
        <dbReference type="HAMAP-Rule" id="MF_00019"/>
    </source>
</evidence>
<dbReference type="EC" id="2.3.1.274" evidence="1"/>
<dbReference type="EMBL" id="CP000942">
    <property type="protein sequence ID" value="ACA33119.1"/>
    <property type="molecule type" value="Genomic_DNA"/>
</dbReference>
<dbReference type="RefSeq" id="WP_006688948.1">
    <property type="nucleotide sequence ID" value="NC_010503.1"/>
</dbReference>
<dbReference type="SMR" id="B1AIJ3"/>
<dbReference type="GeneID" id="29672706"/>
<dbReference type="KEGG" id="upa:UPA3_0212"/>
<dbReference type="HOGENOM" id="CLU_039379_1_1_14"/>
<dbReference type="UniPathway" id="UPA00085"/>
<dbReference type="Proteomes" id="UP000002162">
    <property type="component" value="Chromosome"/>
</dbReference>
<dbReference type="GO" id="GO:0005737">
    <property type="term" value="C:cytoplasm"/>
    <property type="evidence" value="ECO:0007669"/>
    <property type="project" value="UniProtKB-SubCell"/>
</dbReference>
<dbReference type="GO" id="GO:0043811">
    <property type="term" value="F:phosphate:acyl-[acyl carrier protein] acyltransferase activity"/>
    <property type="evidence" value="ECO:0007669"/>
    <property type="project" value="UniProtKB-UniRule"/>
</dbReference>
<dbReference type="GO" id="GO:0006633">
    <property type="term" value="P:fatty acid biosynthetic process"/>
    <property type="evidence" value="ECO:0007669"/>
    <property type="project" value="UniProtKB-UniRule"/>
</dbReference>
<dbReference type="GO" id="GO:0008654">
    <property type="term" value="P:phospholipid biosynthetic process"/>
    <property type="evidence" value="ECO:0007669"/>
    <property type="project" value="UniProtKB-KW"/>
</dbReference>
<dbReference type="Gene3D" id="3.40.718.10">
    <property type="entry name" value="Isopropylmalate Dehydrogenase"/>
    <property type="match status" value="1"/>
</dbReference>
<dbReference type="HAMAP" id="MF_00019">
    <property type="entry name" value="PlsX"/>
    <property type="match status" value="1"/>
</dbReference>
<dbReference type="InterPro" id="IPR003664">
    <property type="entry name" value="FA_synthesis"/>
</dbReference>
<dbReference type="InterPro" id="IPR012281">
    <property type="entry name" value="Phospholipid_synth_PlsX-like"/>
</dbReference>
<dbReference type="NCBIfam" id="TIGR00182">
    <property type="entry name" value="plsX"/>
    <property type="match status" value="1"/>
</dbReference>
<dbReference type="PANTHER" id="PTHR30100">
    <property type="entry name" value="FATTY ACID/PHOSPHOLIPID SYNTHESIS PROTEIN PLSX"/>
    <property type="match status" value="1"/>
</dbReference>
<dbReference type="PANTHER" id="PTHR30100:SF1">
    <property type="entry name" value="PHOSPHATE ACYLTRANSFERASE"/>
    <property type="match status" value="1"/>
</dbReference>
<dbReference type="Pfam" id="PF02504">
    <property type="entry name" value="FA_synthesis"/>
    <property type="match status" value="1"/>
</dbReference>
<dbReference type="PIRSF" id="PIRSF002465">
    <property type="entry name" value="Phsphlp_syn_PlsX"/>
    <property type="match status" value="1"/>
</dbReference>
<dbReference type="SUPFAM" id="SSF53659">
    <property type="entry name" value="Isocitrate/Isopropylmalate dehydrogenase-like"/>
    <property type="match status" value="1"/>
</dbReference>
<name>PLSX_UREP2</name>
<feature type="chain" id="PRO_1000074179" description="Phosphate acyltransferase">
    <location>
        <begin position="1"/>
        <end position="331"/>
    </location>
</feature>